<keyword id="KW-0067">ATP-binding</keyword>
<keyword id="KW-0963">Cytoplasm</keyword>
<keyword id="KW-0315">Glutamine amidotransferase</keyword>
<keyword id="KW-0378">Hydrolase</keyword>
<keyword id="KW-0436">Ligase</keyword>
<keyword id="KW-0547">Nucleotide-binding</keyword>
<keyword id="KW-0658">Purine biosynthesis</keyword>
<keyword id="KW-1185">Reference proteome</keyword>
<gene>
    <name evidence="1" type="primary">purQ</name>
    <name type="ordered locus">NFA_5680</name>
</gene>
<organism>
    <name type="scientific">Nocardia farcinica (strain IFM 10152)</name>
    <dbReference type="NCBI Taxonomy" id="247156"/>
    <lineage>
        <taxon>Bacteria</taxon>
        <taxon>Bacillati</taxon>
        <taxon>Actinomycetota</taxon>
        <taxon>Actinomycetes</taxon>
        <taxon>Mycobacteriales</taxon>
        <taxon>Nocardiaceae</taxon>
        <taxon>Nocardia</taxon>
    </lineage>
</organism>
<name>PURQ_NOCFA</name>
<protein>
    <recommendedName>
        <fullName evidence="1">Phosphoribosylformylglycinamidine synthase subunit PurQ</fullName>
        <shortName evidence="1">FGAM synthase</shortName>
        <ecNumber evidence="1">6.3.5.3</ecNumber>
    </recommendedName>
    <alternativeName>
        <fullName evidence="1">Formylglycinamide ribonucleotide amidotransferase subunit I</fullName>
        <shortName evidence="1">FGAR amidotransferase I</shortName>
        <shortName evidence="1">FGAR-AT I</shortName>
    </alternativeName>
    <alternativeName>
        <fullName evidence="1">Glutaminase PurQ</fullName>
        <ecNumber evidence="1">3.5.1.2</ecNumber>
    </alternativeName>
    <alternativeName>
        <fullName evidence="1">Phosphoribosylformylglycinamidine synthase subunit I</fullName>
    </alternativeName>
</protein>
<feature type="chain" id="PRO_0000100573" description="Phosphoribosylformylglycinamidine synthase subunit PurQ">
    <location>
        <begin position="1"/>
        <end position="225"/>
    </location>
</feature>
<feature type="domain" description="Glutamine amidotransferase type-1" evidence="1">
    <location>
        <begin position="4"/>
        <end position="225"/>
    </location>
</feature>
<feature type="active site" description="Nucleophile" evidence="1">
    <location>
        <position position="87"/>
    </location>
</feature>
<feature type="active site" evidence="1">
    <location>
        <position position="196"/>
    </location>
</feature>
<feature type="active site" evidence="1">
    <location>
        <position position="198"/>
    </location>
</feature>
<accession>Q5Z2C8</accession>
<proteinExistence type="inferred from homology"/>
<dbReference type="EC" id="6.3.5.3" evidence="1"/>
<dbReference type="EC" id="3.5.1.2" evidence="1"/>
<dbReference type="EMBL" id="AP006618">
    <property type="protein sequence ID" value="BAD55413.1"/>
    <property type="molecule type" value="Genomic_DNA"/>
</dbReference>
<dbReference type="RefSeq" id="WP_011207100.1">
    <property type="nucleotide sequence ID" value="NC_006361.1"/>
</dbReference>
<dbReference type="SMR" id="Q5Z2C8"/>
<dbReference type="STRING" id="247156.NFA_5680"/>
<dbReference type="GeneID" id="61131403"/>
<dbReference type="KEGG" id="nfa:NFA_5680"/>
<dbReference type="eggNOG" id="COG0047">
    <property type="taxonomic scope" value="Bacteria"/>
</dbReference>
<dbReference type="HOGENOM" id="CLU_001031_3_1_11"/>
<dbReference type="OrthoDB" id="9804441at2"/>
<dbReference type="UniPathway" id="UPA00074">
    <property type="reaction ID" value="UER00128"/>
</dbReference>
<dbReference type="Proteomes" id="UP000006820">
    <property type="component" value="Chromosome"/>
</dbReference>
<dbReference type="GO" id="GO:0005737">
    <property type="term" value="C:cytoplasm"/>
    <property type="evidence" value="ECO:0007669"/>
    <property type="project" value="UniProtKB-SubCell"/>
</dbReference>
<dbReference type="GO" id="GO:0005524">
    <property type="term" value="F:ATP binding"/>
    <property type="evidence" value="ECO:0007669"/>
    <property type="project" value="UniProtKB-KW"/>
</dbReference>
<dbReference type="GO" id="GO:0004359">
    <property type="term" value="F:glutaminase activity"/>
    <property type="evidence" value="ECO:0007669"/>
    <property type="project" value="UniProtKB-EC"/>
</dbReference>
<dbReference type="GO" id="GO:0004642">
    <property type="term" value="F:phosphoribosylformylglycinamidine synthase activity"/>
    <property type="evidence" value="ECO:0007669"/>
    <property type="project" value="UniProtKB-UniRule"/>
</dbReference>
<dbReference type="GO" id="GO:0006189">
    <property type="term" value="P:'de novo' IMP biosynthetic process"/>
    <property type="evidence" value="ECO:0007669"/>
    <property type="project" value="UniProtKB-UniRule"/>
</dbReference>
<dbReference type="CDD" id="cd01740">
    <property type="entry name" value="GATase1_FGAR_AT"/>
    <property type="match status" value="1"/>
</dbReference>
<dbReference type="FunFam" id="3.40.50.880:FF:000019">
    <property type="entry name" value="Phosphoribosylformylglycinamidine synthase subunit PurQ"/>
    <property type="match status" value="1"/>
</dbReference>
<dbReference type="Gene3D" id="3.40.50.880">
    <property type="match status" value="1"/>
</dbReference>
<dbReference type="HAMAP" id="MF_00421">
    <property type="entry name" value="PurQ"/>
    <property type="match status" value="1"/>
</dbReference>
<dbReference type="InterPro" id="IPR029062">
    <property type="entry name" value="Class_I_gatase-like"/>
</dbReference>
<dbReference type="InterPro" id="IPR010075">
    <property type="entry name" value="PRibForGlyAmidine_synth_PurQ"/>
</dbReference>
<dbReference type="NCBIfam" id="TIGR01737">
    <property type="entry name" value="FGAM_synth_I"/>
    <property type="match status" value="1"/>
</dbReference>
<dbReference type="NCBIfam" id="NF002957">
    <property type="entry name" value="PRK03619.1"/>
    <property type="match status" value="1"/>
</dbReference>
<dbReference type="PANTHER" id="PTHR47552">
    <property type="entry name" value="PHOSPHORIBOSYLFORMYLGLYCINAMIDINE SYNTHASE SUBUNIT PURQ"/>
    <property type="match status" value="1"/>
</dbReference>
<dbReference type="PANTHER" id="PTHR47552:SF1">
    <property type="entry name" value="PHOSPHORIBOSYLFORMYLGLYCINAMIDINE SYNTHASE SUBUNIT PURQ"/>
    <property type="match status" value="1"/>
</dbReference>
<dbReference type="Pfam" id="PF13507">
    <property type="entry name" value="GATase_5"/>
    <property type="match status" value="1"/>
</dbReference>
<dbReference type="PIRSF" id="PIRSF001586">
    <property type="entry name" value="FGAM_synth_I"/>
    <property type="match status" value="1"/>
</dbReference>
<dbReference type="SMART" id="SM01211">
    <property type="entry name" value="GATase_5"/>
    <property type="match status" value="1"/>
</dbReference>
<dbReference type="SUPFAM" id="SSF52317">
    <property type="entry name" value="Class I glutamine amidotransferase-like"/>
    <property type="match status" value="1"/>
</dbReference>
<dbReference type="PROSITE" id="PS51273">
    <property type="entry name" value="GATASE_TYPE_1"/>
    <property type="match status" value="1"/>
</dbReference>
<comment type="function">
    <text evidence="1">Part of the phosphoribosylformylglycinamidine synthase complex involved in the purines biosynthetic pathway. Catalyzes the ATP-dependent conversion of formylglycinamide ribonucleotide (FGAR) and glutamine to yield formylglycinamidine ribonucleotide (FGAM) and glutamate. The FGAM synthase complex is composed of three subunits. PurQ produces an ammonia molecule by converting glutamine to glutamate. PurL transfers the ammonia molecule to FGAR to form FGAM in an ATP-dependent manner. PurS interacts with PurQ and PurL and is thought to assist in the transfer of the ammonia molecule from PurQ to PurL.</text>
</comment>
<comment type="catalytic activity">
    <reaction evidence="1">
        <text>N(2)-formyl-N(1)-(5-phospho-beta-D-ribosyl)glycinamide + L-glutamine + ATP + H2O = 2-formamido-N(1)-(5-O-phospho-beta-D-ribosyl)acetamidine + L-glutamate + ADP + phosphate + H(+)</text>
        <dbReference type="Rhea" id="RHEA:17129"/>
        <dbReference type="ChEBI" id="CHEBI:15377"/>
        <dbReference type="ChEBI" id="CHEBI:15378"/>
        <dbReference type="ChEBI" id="CHEBI:29985"/>
        <dbReference type="ChEBI" id="CHEBI:30616"/>
        <dbReference type="ChEBI" id="CHEBI:43474"/>
        <dbReference type="ChEBI" id="CHEBI:58359"/>
        <dbReference type="ChEBI" id="CHEBI:147286"/>
        <dbReference type="ChEBI" id="CHEBI:147287"/>
        <dbReference type="ChEBI" id="CHEBI:456216"/>
        <dbReference type="EC" id="6.3.5.3"/>
    </reaction>
</comment>
<comment type="catalytic activity">
    <reaction evidence="1">
        <text>L-glutamine + H2O = L-glutamate + NH4(+)</text>
        <dbReference type="Rhea" id="RHEA:15889"/>
        <dbReference type="ChEBI" id="CHEBI:15377"/>
        <dbReference type="ChEBI" id="CHEBI:28938"/>
        <dbReference type="ChEBI" id="CHEBI:29985"/>
        <dbReference type="ChEBI" id="CHEBI:58359"/>
        <dbReference type="EC" id="3.5.1.2"/>
    </reaction>
</comment>
<comment type="pathway">
    <text evidence="1">Purine metabolism; IMP biosynthesis via de novo pathway; 5-amino-1-(5-phospho-D-ribosyl)imidazole from N(2)-formyl-N(1)-(5-phospho-D-ribosyl)glycinamide: step 1/2.</text>
</comment>
<comment type="subunit">
    <text evidence="1">Part of the FGAM synthase complex composed of 1 PurL, 1 PurQ and 2 PurS subunits.</text>
</comment>
<comment type="subcellular location">
    <subcellularLocation>
        <location evidence="1">Cytoplasm</location>
    </subcellularLocation>
</comment>
<reference key="1">
    <citation type="journal article" date="2004" name="Proc. Natl. Acad. Sci. U.S.A.">
        <title>The complete genomic sequence of Nocardia farcinica IFM 10152.</title>
        <authorList>
            <person name="Ishikawa J."/>
            <person name="Yamashita A."/>
            <person name="Mikami Y."/>
            <person name="Hoshino Y."/>
            <person name="Kurita H."/>
            <person name="Hotta K."/>
            <person name="Shiba T."/>
            <person name="Hattori M."/>
        </authorList>
    </citation>
    <scope>NUCLEOTIDE SEQUENCE [LARGE SCALE GENOMIC DNA]</scope>
    <source>
        <strain>IFM 10152</strain>
    </source>
</reference>
<evidence type="ECO:0000255" key="1">
    <source>
        <dbReference type="HAMAP-Rule" id="MF_00421"/>
    </source>
</evidence>
<sequence length="225" mass="23658">MSARIGVITFPGTLDDVDAVRAVRLAGAEAVNLWHADADLKQVDAVIVPGGFSYGDYLRAGAIARFAPVMGEVVRAAEQGMPVLGICNGFQVLCEAGLLPGALTRNEGLHFICRDQWLTVESVSTAWTSRYEPGAQILIPLKSGEGRYQAAPAVLDELEGEGRVVFRYSGDNPNGSQRGIAGISSANGRVVGLMPHPEHATEALTGPSDDGLGLFLSVLDTLVTA</sequence>